<organism>
    <name type="scientific">Yersinia pseudotuberculosis serotype I (strain IP32953)</name>
    <dbReference type="NCBI Taxonomy" id="273123"/>
    <lineage>
        <taxon>Bacteria</taxon>
        <taxon>Pseudomonadati</taxon>
        <taxon>Pseudomonadota</taxon>
        <taxon>Gammaproteobacteria</taxon>
        <taxon>Enterobacterales</taxon>
        <taxon>Yersiniaceae</taxon>
        <taxon>Yersinia</taxon>
    </lineage>
</organism>
<dbReference type="EC" id="2.1.1.223" evidence="1"/>
<dbReference type="EMBL" id="BX936398">
    <property type="protein sequence ID" value="CAH22137.1"/>
    <property type="molecule type" value="Genomic_DNA"/>
</dbReference>
<dbReference type="SMR" id="Q667U2"/>
<dbReference type="KEGG" id="yps:YPTB2899"/>
<dbReference type="Proteomes" id="UP000001011">
    <property type="component" value="Chromosome"/>
</dbReference>
<dbReference type="GO" id="GO:0005737">
    <property type="term" value="C:cytoplasm"/>
    <property type="evidence" value="ECO:0007669"/>
    <property type="project" value="UniProtKB-SubCell"/>
</dbReference>
<dbReference type="GO" id="GO:0003676">
    <property type="term" value="F:nucleic acid binding"/>
    <property type="evidence" value="ECO:0007669"/>
    <property type="project" value="InterPro"/>
</dbReference>
<dbReference type="GO" id="GO:0016430">
    <property type="term" value="F:tRNA (adenine-N6)-methyltransferase activity"/>
    <property type="evidence" value="ECO:0007669"/>
    <property type="project" value="UniProtKB-UniRule"/>
</dbReference>
<dbReference type="GO" id="GO:0032259">
    <property type="term" value="P:methylation"/>
    <property type="evidence" value="ECO:0007669"/>
    <property type="project" value="UniProtKB-KW"/>
</dbReference>
<dbReference type="GO" id="GO:0008033">
    <property type="term" value="P:tRNA processing"/>
    <property type="evidence" value="ECO:0007669"/>
    <property type="project" value="UniProtKB-UniRule"/>
</dbReference>
<dbReference type="CDD" id="cd02440">
    <property type="entry name" value="AdoMet_MTases"/>
    <property type="match status" value="1"/>
</dbReference>
<dbReference type="Gene3D" id="3.40.50.150">
    <property type="entry name" value="Vaccinia Virus protein VP39"/>
    <property type="match status" value="1"/>
</dbReference>
<dbReference type="HAMAP" id="MF_01872">
    <property type="entry name" value="tRNA_methyltr_YfiC"/>
    <property type="match status" value="1"/>
</dbReference>
<dbReference type="InterPro" id="IPR002052">
    <property type="entry name" value="DNA_methylase_N6_adenine_CS"/>
</dbReference>
<dbReference type="InterPro" id="IPR029063">
    <property type="entry name" value="SAM-dependent_MTases_sf"/>
</dbReference>
<dbReference type="InterPro" id="IPR007848">
    <property type="entry name" value="Small_mtfrase_dom"/>
</dbReference>
<dbReference type="InterPro" id="IPR050210">
    <property type="entry name" value="tRNA_Adenine-N(6)_MTase"/>
</dbReference>
<dbReference type="InterPro" id="IPR022882">
    <property type="entry name" value="tRNA_adenine-N6_MeTrfase"/>
</dbReference>
<dbReference type="NCBIfam" id="NF047853">
    <property type="entry name" value="tRm6a37MtseTrmN"/>
    <property type="match status" value="1"/>
</dbReference>
<dbReference type="PANTHER" id="PTHR47739">
    <property type="entry name" value="TRNA1(VAL) (ADENINE(37)-N6)-METHYLTRANSFERASE"/>
    <property type="match status" value="1"/>
</dbReference>
<dbReference type="PANTHER" id="PTHR47739:SF1">
    <property type="entry name" value="TRNA1(VAL) (ADENINE(37)-N6)-METHYLTRANSFERASE"/>
    <property type="match status" value="1"/>
</dbReference>
<dbReference type="Pfam" id="PF05175">
    <property type="entry name" value="MTS"/>
    <property type="match status" value="1"/>
</dbReference>
<dbReference type="PRINTS" id="PR00507">
    <property type="entry name" value="N12N6MTFRASE"/>
</dbReference>
<dbReference type="SUPFAM" id="SSF53335">
    <property type="entry name" value="S-adenosyl-L-methionine-dependent methyltransferases"/>
    <property type="match status" value="1"/>
</dbReference>
<dbReference type="PROSITE" id="PS00092">
    <property type="entry name" value="N6_MTASE"/>
    <property type="match status" value="1"/>
</dbReference>
<feature type="chain" id="PRO_0000387456" description="tRNA1(Val) (adenine(37)-N6)-methyltransferase">
    <location>
        <begin position="1"/>
        <end position="252"/>
    </location>
</feature>
<gene>
    <name type="ordered locus">YPTB2899</name>
</gene>
<name>TRMN6_YERPS</name>
<protein>
    <recommendedName>
        <fullName evidence="1">tRNA1(Val) (adenine(37)-N6)-methyltransferase</fullName>
        <ecNumber evidence="1">2.1.1.223</ecNumber>
    </recommendedName>
    <alternativeName>
        <fullName evidence="1">tRNA m6A37 methyltransferase</fullName>
    </alternativeName>
</protein>
<proteinExistence type="inferred from homology"/>
<reference key="1">
    <citation type="journal article" date="2004" name="Proc. Natl. Acad. Sci. U.S.A.">
        <title>Insights into the evolution of Yersinia pestis through whole-genome comparison with Yersinia pseudotuberculosis.</title>
        <authorList>
            <person name="Chain P.S.G."/>
            <person name="Carniel E."/>
            <person name="Larimer F.W."/>
            <person name="Lamerdin J."/>
            <person name="Stoutland P.O."/>
            <person name="Regala W.M."/>
            <person name="Georgescu A.M."/>
            <person name="Vergez L.M."/>
            <person name="Land M.L."/>
            <person name="Motin V.L."/>
            <person name="Brubaker R.R."/>
            <person name="Fowler J."/>
            <person name="Hinnebusch J."/>
            <person name="Marceau M."/>
            <person name="Medigue C."/>
            <person name="Simonet M."/>
            <person name="Chenal-Francisque V."/>
            <person name="Souza B."/>
            <person name="Dacheux D."/>
            <person name="Elliott J.M."/>
            <person name="Derbise A."/>
            <person name="Hauser L.J."/>
            <person name="Garcia E."/>
        </authorList>
    </citation>
    <scope>NUCLEOTIDE SEQUENCE [LARGE SCALE GENOMIC DNA]</scope>
    <source>
        <strain>IP32953</strain>
    </source>
</reference>
<keyword id="KW-0963">Cytoplasm</keyword>
<keyword id="KW-0489">Methyltransferase</keyword>
<keyword id="KW-0949">S-adenosyl-L-methionine</keyword>
<keyword id="KW-0808">Transferase</keyword>
<keyword id="KW-0819">tRNA processing</keyword>
<accession>Q667U2</accession>
<comment type="function">
    <text evidence="1">Specifically methylates the adenine in position 37 of tRNA(1)(Val) (anticodon cmo5UAC).</text>
</comment>
<comment type="catalytic activity">
    <reaction evidence="1">
        <text>adenosine(37) in tRNA1(Val) + S-adenosyl-L-methionine = N(6)-methyladenosine(37) in tRNA1(Val) + S-adenosyl-L-homocysteine + H(+)</text>
        <dbReference type="Rhea" id="RHEA:43160"/>
        <dbReference type="Rhea" id="RHEA-COMP:10369"/>
        <dbReference type="Rhea" id="RHEA-COMP:10370"/>
        <dbReference type="ChEBI" id="CHEBI:15378"/>
        <dbReference type="ChEBI" id="CHEBI:57856"/>
        <dbReference type="ChEBI" id="CHEBI:59789"/>
        <dbReference type="ChEBI" id="CHEBI:74411"/>
        <dbReference type="ChEBI" id="CHEBI:74449"/>
        <dbReference type="EC" id="2.1.1.223"/>
    </reaction>
</comment>
<comment type="subcellular location">
    <subcellularLocation>
        <location evidence="1">Cytoplasm</location>
    </subcellularLocation>
</comment>
<comment type="similarity">
    <text evidence="1">Belongs to the methyltransferase superfamily. tRNA (adenine-N(6)-)-methyltransferase family.</text>
</comment>
<evidence type="ECO:0000255" key="1">
    <source>
        <dbReference type="HAMAP-Rule" id="MF_01872"/>
    </source>
</evidence>
<sequence>MVTNVGEQLKKQPVLRGGGFTFKQFFVAHDRCAMKVGTDGVLLGAWVPVLHARRVLDIGCGSGLIALMIAQRSLPQVQIDGVELEPAAAQQASSNVELSPWAERIHIHQQDIHQFAENHPHQYDLIVSNPPYFAPAIACRDEARDTARYTGSLTHDALLNCAEKLITEDGMFCVVLPHELGIEFARLAGQQGWFVRCQVDIRDRPGKPLHRMLLTLSRQAGETVYQHLALRQSEGVYSPEFCQLISDFYLNY</sequence>